<comment type="function">
    <text evidence="2">Catalyzes the two successive C-2 and C-7 methylation reactions involved in the conversion of uroporphyrinogen III to precorrin-2 via the intermediate formation of precorrin-1. It is a step in the biosynthesis of both cobalamin (vitamin B12) and siroheme. Neither uroporphyrin III nor the chlorin (factor I) is a substrate of SUMT.</text>
</comment>
<comment type="catalytic activity">
    <reaction evidence="2">
        <text>uroporphyrinogen III + 2 S-adenosyl-L-methionine = precorrin-2 + 2 S-adenosyl-L-homocysteine + H(+)</text>
        <dbReference type="Rhea" id="RHEA:32459"/>
        <dbReference type="ChEBI" id="CHEBI:15378"/>
        <dbReference type="ChEBI" id="CHEBI:57308"/>
        <dbReference type="ChEBI" id="CHEBI:57856"/>
        <dbReference type="ChEBI" id="CHEBI:58827"/>
        <dbReference type="ChEBI" id="CHEBI:59789"/>
        <dbReference type="EC" id="2.1.1.107"/>
    </reaction>
    <physiologicalReaction direction="left-to-right" evidence="5">
        <dbReference type="Rhea" id="RHEA:32460"/>
    </physiologicalReaction>
</comment>
<comment type="catalytic activity">
    <reaction evidence="2">
        <text>uroporphyrinogen III + S-adenosyl-L-methionine = precorrin-1 + S-adenosyl-L-homocysteine + H(+)</text>
        <dbReference type="Rhea" id="RHEA:19089"/>
        <dbReference type="ChEBI" id="CHEBI:15378"/>
        <dbReference type="ChEBI" id="CHEBI:57308"/>
        <dbReference type="ChEBI" id="CHEBI:57856"/>
        <dbReference type="ChEBI" id="CHEBI:58893"/>
        <dbReference type="ChEBI" id="CHEBI:59789"/>
    </reaction>
    <physiologicalReaction direction="left-to-right" evidence="5">
        <dbReference type="Rhea" id="RHEA:19090"/>
    </physiologicalReaction>
</comment>
<comment type="catalytic activity">
    <reaction evidence="2">
        <text>precorrin-1 + S-adenosyl-L-methionine = precorrin-2 + S-adenosyl-L-homocysteine</text>
        <dbReference type="Rhea" id="RHEA:21972"/>
        <dbReference type="ChEBI" id="CHEBI:57856"/>
        <dbReference type="ChEBI" id="CHEBI:58827"/>
        <dbReference type="ChEBI" id="CHEBI:58893"/>
        <dbReference type="ChEBI" id="CHEBI:59789"/>
    </reaction>
    <physiologicalReaction direction="left-to-right" evidence="5">
        <dbReference type="Rhea" id="RHEA:21973"/>
    </physiologicalReaction>
</comment>
<comment type="activity regulation">
    <text evidence="2">S-adenosylhomocysteine is an extremely powerful competitive inhibitor of the uroporphyrinogen III methylation. SUMT exhibits a substrate inhibition phenomenon at uroporphyrinogen III concentrations above 2 uM; this property might play a regulatory role in cobalamin biosynthesis. The enzyme activity is completely insensitive to feedback inhibition by cobalamin and corrinoid intermediates.</text>
</comment>
<comment type="biophysicochemical properties">
    <kinetics>
        <KM evidence="2">6.3 uM for S-adenosyl-L-methionine</KM>
        <KM evidence="2">1 uM for uroporphyrinogen III</KM>
        <Vmax evidence="2">640.0 nmol/h/mg enzyme</Vmax>
        <text evidence="2">kcat is 38 h(-1).</text>
    </kinetics>
    <phDependence>
        <text evidence="2">Optimum pH is 7.7.</text>
    </phDependence>
</comment>
<comment type="pathway">
    <text evidence="2">Cofactor biosynthesis; adenosylcobalamin biosynthesis; precorrin-2 from uroporphyrinogen III: step 1/1.</text>
</comment>
<comment type="pathway">
    <text evidence="5">Porphyrin-containing compound metabolism; siroheme biosynthesis; precorrin-2 from uroporphyrinogen III: step 1/1.</text>
</comment>
<comment type="subunit">
    <text evidence="1 2">Homodimer.</text>
</comment>
<comment type="disruption phenotype">
    <text evidence="2">Cells lacking this gene are deficient in cobalamin biosynthesis.</text>
</comment>
<comment type="miscellaneous">
    <text evidence="5">Uroporphyrinogen III is a key intermediate because of its position at the branch point of two divergent pathways. One pathway leads to protoheme, and the other one is the cobalamin and siroheme pathway.</text>
</comment>
<comment type="similarity">
    <text evidence="4">Belongs to the precorrin methyltransferase family.</text>
</comment>
<comment type="caution">
    <text evidence="4">Was originally thought to originate from Pseudomonas denitrificans, but similarity searches show that the sequence is much closer to Sinorhizobium. The entry's taxonomy has been changed.</text>
</comment>
<sequence length="280" mass="29253">MIDDLFAGLPALEKGSVWLVGAGPGDPGLLTLHAANALRQADVIVHDALVNEDCLKLARPGAVLEFAGKRGGKPSPKQRDISLRLVELARAGNRVLRLKGGDPFVFGRGGEEALTLVEHQVPFRIVPGITAGIGGLAYAGIPVTHREVNHAVTFLTGHDSSGLVPDRINWQGIASGSPVIVMYMAMKHIGAITANLIAGGRSPDEPVAFVCNAATPQQAVLETTLARAEADVAAAGLEPPAIVVVGEVVRLRAALDWIGALDGRKLAADPFANRILRNPA</sequence>
<proteinExistence type="evidence at protein level"/>
<protein>
    <recommendedName>
        <fullName evidence="5">Uroporphyrinogen-III C-methyltransferase</fullName>
        <shortName>Urogen III methylase</shortName>
        <ecNumber evidence="2">2.1.1.107</ecNumber>
    </recommendedName>
    <alternativeName>
        <fullName evidence="3">S-adenosyl-L-methionine:uroporphyrinogen III methyltransferase</fullName>
        <shortName evidence="3">SUMT</shortName>
    </alternativeName>
    <alternativeName>
        <fullName>Uroporphyrinogen III methylase</fullName>
        <shortName>UROM</shortName>
    </alternativeName>
</protein>
<reference key="1">
    <citation type="journal article" date="1990" name="J. Bacteriol.">
        <title>Nucleotide sequence of a Pseudomonas denitrificans 5.4-kilobase DNA fragment containing five cob genes and identification of structural genes encoding S-adenosyl-L-methionine: uroporphyrinogen III methyltransferase and cobyrinic acid a,c-diamide synthase.</title>
        <authorList>
            <person name="Crouzet J."/>
            <person name="Cauchois L."/>
            <person name="Blanche F."/>
            <person name="Debussche L."/>
            <person name="Thibaut D."/>
            <person name="Rouyez M.-C."/>
            <person name="Rigault S."/>
            <person name="Mayaux J.-F."/>
            <person name="Cameron B."/>
        </authorList>
    </citation>
    <scope>NUCLEOTIDE SEQUENCE [GENOMIC DNA]</scope>
    <scope>PROTEIN SEQUENCE OF 1-10</scope>
    <source>
        <strain>SC510</strain>
    </source>
</reference>
<reference key="2">
    <citation type="journal article" date="1989" name="J. Bacteriol.">
        <title>Purification and characterization of S-adenosyl-L-methionine: uroporphyrinogen III methyltransferase from Pseudomonas denitrificans.</title>
        <authorList>
            <person name="Blanche F."/>
            <person name="Debussche L."/>
            <person name="Thibaut D."/>
            <person name="Crouzet J."/>
            <person name="Cameron B."/>
        </authorList>
    </citation>
    <scope>FUNCTION</scope>
    <scope>CATALYTIC ACTIVITY</scope>
    <scope>BIOPHYSICOCHEMICAL PROPERTIES</scope>
    <scope>SUBSTRATE SPECIFICITY</scope>
    <scope>ACTIVITY REGULATION</scope>
    <scope>SUBUNIT</scope>
    <scope>DISRUPTION PHENOTYPE</scope>
    <scope>PATHWAY</scope>
</reference>
<reference evidence="7" key="3">
    <citation type="journal article" date="2004" name="J. Mol. Biol.">
        <title>Structure/function studies on a S-adenosyl-L-methionine-dependent uroporphyrinogen III C methyltransferase (SUMT), a key regulatory enzyme of tetrapyrrole biosynthesis.</title>
        <authorList>
            <person name="Vevodova J."/>
            <person name="Graham R.M."/>
            <person name="Raux E."/>
            <person name="Schubert H.L."/>
            <person name="Roper D.I."/>
            <person name="Brindley A.A."/>
            <person name="Ian Scott A."/>
            <person name="Roessner C.A."/>
            <person name="Stamford N.P.J."/>
            <person name="Stroupe M.E."/>
            <person name="Getzoff E.D."/>
            <person name="Warren M.J."/>
            <person name="Wilson K.S."/>
        </authorList>
    </citation>
    <scope>X-RAY CRYSTALLOGRAPHY (2.7 ANGSTROMS) IN COMPLEX WITH S-ADENOSYL-L-HOMOCYSTEINE</scope>
    <scope>SUBUNIT</scope>
    <scope>MUTAGENESIS OF ASP-47; LEU-49; PHE-106; THR-130; TYR-183 AND MET-184</scope>
</reference>
<feature type="chain" id="PRO_0000150372" description="Uroporphyrinogen-III C-methyltransferase">
    <location>
        <begin position="1"/>
        <end position="280"/>
    </location>
</feature>
<feature type="binding site" evidence="1 7">
    <location>
        <position position="24"/>
    </location>
    <ligand>
        <name>S-adenosyl-L-homocysteine</name>
        <dbReference type="ChEBI" id="CHEBI:57856"/>
    </ligand>
</feature>
<feature type="binding site" evidence="1 7">
    <location>
        <begin position="100"/>
        <end position="102"/>
    </location>
    <ligand>
        <name>S-adenosyl-L-homocysteine</name>
        <dbReference type="ChEBI" id="CHEBI:57856"/>
    </ligand>
</feature>
<feature type="binding site" evidence="1 7">
    <location>
        <begin position="130"/>
        <end position="131"/>
    </location>
    <ligand>
        <name>S-adenosyl-L-homocysteine</name>
        <dbReference type="ChEBI" id="CHEBI:57856"/>
    </ligand>
</feature>
<feature type="binding site" evidence="1 7">
    <location>
        <position position="184"/>
    </location>
    <ligand>
        <name>S-adenosyl-L-homocysteine</name>
        <dbReference type="ChEBI" id="CHEBI:57856"/>
    </ligand>
</feature>
<feature type="binding site" evidence="1 7">
    <location>
        <position position="213"/>
    </location>
    <ligand>
        <name>S-adenosyl-L-homocysteine</name>
        <dbReference type="ChEBI" id="CHEBI:57856"/>
    </ligand>
</feature>
<feature type="binding site" evidence="1 7">
    <location>
        <position position="241"/>
    </location>
    <ligand>
        <name>S-adenosyl-L-homocysteine</name>
        <dbReference type="ChEBI" id="CHEBI:57856"/>
    </ligand>
</feature>
<feature type="mutagenesis site" description="Reduces S-adenosyl-L-methionine binding by about 75%. Causes accumulation of precorrin-1." evidence="1">
    <original>D</original>
    <variation>N</variation>
    <location>
        <position position="47"/>
    </location>
</feature>
<feature type="mutagenesis site" description="Reduces S-adenosyl-L-methionine binding by about 50%. Causes slow synthesis of precorrin-2 and accumulation of precorrin-1." evidence="1">
    <original>L</original>
    <variation>A</variation>
    <location>
        <position position="49"/>
    </location>
</feature>
<feature type="mutagenesis site" description="Strongly reduces S-adenosyl-L-methionine binding. Loss of activity." evidence="1">
    <original>F</original>
    <variation>A</variation>
    <location>
        <position position="106"/>
    </location>
</feature>
<feature type="mutagenesis site" description="Strongly reduces S-adenosyl-L-methionine binding. Causes slow synthesis of precorrin-2." evidence="1">
    <original>T</original>
    <variation>A</variation>
    <location>
        <position position="130"/>
    </location>
</feature>
<feature type="mutagenesis site" description="Strongly reduces S-adenosyl-L-methionine binding. Loss of activity." evidence="1">
    <original>Y</original>
    <variation>A</variation>
    <location>
        <position position="183"/>
    </location>
</feature>
<feature type="mutagenesis site" description="Strongly reduces S-adenosyl-L-methionine binding. Causes drastic effects on enzyme activity." evidence="1">
    <original>M</original>
    <variation>A</variation>
    <location>
        <position position="184"/>
    </location>
</feature>
<feature type="strand" evidence="8">
    <location>
        <begin position="17"/>
        <end position="21"/>
    </location>
</feature>
<feature type="strand" evidence="8">
    <location>
        <begin position="23"/>
        <end position="25"/>
    </location>
</feature>
<feature type="strand" evidence="8">
    <location>
        <begin position="29"/>
        <end position="31"/>
    </location>
</feature>
<feature type="helix" evidence="8">
    <location>
        <begin position="32"/>
        <end position="40"/>
    </location>
</feature>
<feature type="strand" evidence="8">
    <location>
        <begin position="42"/>
        <end position="46"/>
    </location>
</feature>
<feature type="helix" evidence="8">
    <location>
        <begin position="54"/>
        <end position="57"/>
    </location>
</feature>
<feature type="strand" evidence="8">
    <location>
        <begin position="64"/>
        <end position="66"/>
    </location>
</feature>
<feature type="helix" evidence="8">
    <location>
        <begin position="78"/>
        <end position="90"/>
    </location>
</feature>
<feature type="strand" evidence="8">
    <location>
        <begin position="95"/>
        <end position="101"/>
    </location>
</feature>
<feature type="strand" evidence="8">
    <location>
        <begin position="105"/>
        <end position="108"/>
    </location>
</feature>
<feature type="helix" evidence="8">
    <location>
        <begin position="109"/>
        <end position="117"/>
    </location>
</feature>
<feature type="turn" evidence="8">
    <location>
        <begin position="118"/>
        <end position="120"/>
    </location>
</feature>
<feature type="strand" evidence="8">
    <location>
        <begin position="123"/>
        <end position="126"/>
    </location>
</feature>
<feature type="turn" evidence="8">
    <location>
        <begin position="131"/>
        <end position="133"/>
    </location>
</feature>
<feature type="helix" evidence="8">
    <location>
        <begin position="134"/>
        <end position="138"/>
    </location>
</feature>
<feature type="turn" evidence="8">
    <location>
        <begin position="146"/>
        <end position="148"/>
    </location>
</feature>
<feature type="strand" evidence="8">
    <location>
        <begin position="150"/>
        <end position="156"/>
    </location>
</feature>
<feature type="helix" evidence="8">
    <location>
        <begin position="170"/>
        <end position="174"/>
    </location>
</feature>
<feature type="strand" evidence="8">
    <location>
        <begin position="178"/>
        <end position="184"/>
    </location>
</feature>
<feature type="helix" evidence="8">
    <location>
        <begin position="189"/>
        <end position="198"/>
    </location>
</feature>
<feature type="strand" evidence="8">
    <location>
        <begin position="206"/>
        <end position="212"/>
    </location>
</feature>
<feature type="strand" evidence="8">
    <location>
        <begin position="219"/>
        <end position="224"/>
    </location>
</feature>
<feature type="turn" evidence="8">
    <location>
        <begin position="225"/>
        <end position="227"/>
    </location>
</feature>
<feature type="helix" evidence="8">
    <location>
        <begin position="228"/>
        <end position="235"/>
    </location>
</feature>
<feature type="strand" evidence="8">
    <location>
        <begin position="239"/>
        <end position="246"/>
    </location>
</feature>
<feature type="helix" evidence="8">
    <location>
        <begin position="247"/>
        <end position="251"/>
    </location>
</feature>
<feature type="helix" evidence="8">
    <location>
        <begin position="252"/>
        <end position="255"/>
    </location>
</feature>
<feature type="helix" evidence="8">
    <location>
        <begin position="257"/>
        <end position="261"/>
    </location>
</feature>
<dbReference type="EC" id="2.1.1.107" evidence="2"/>
<dbReference type="EMBL" id="M59236">
    <property type="protein sequence ID" value="AAA25773.1"/>
    <property type="molecule type" value="Genomic_DNA"/>
</dbReference>
<dbReference type="PDB" id="1S4D">
    <property type="method" value="X-ray"/>
    <property type="resolution" value="2.70 A"/>
    <property type="chains" value="A/B/D/E/F/G/H/I/J/K/L/M=1-280"/>
</dbReference>
<dbReference type="PDBsum" id="1S4D"/>
<dbReference type="SMR" id="P21631"/>
<dbReference type="DrugBank" id="DB01752">
    <property type="generic name" value="S-adenosyl-L-homocysteine"/>
</dbReference>
<dbReference type="BioCyc" id="MetaCyc:MONOMER-82"/>
<dbReference type="UniPathway" id="UPA00148">
    <property type="reaction ID" value="UER00211"/>
</dbReference>
<dbReference type="UniPathway" id="UPA00262">
    <property type="reaction ID" value="UER00211"/>
</dbReference>
<dbReference type="EvolutionaryTrace" id="P21631"/>
<dbReference type="GO" id="GO:0004851">
    <property type="term" value="F:uroporphyrin-III C-methyltransferase activity"/>
    <property type="evidence" value="ECO:0007669"/>
    <property type="project" value="UniProtKB-EC"/>
</dbReference>
<dbReference type="GO" id="GO:0009236">
    <property type="term" value="P:cobalamin biosynthetic process"/>
    <property type="evidence" value="ECO:0007669"/>
    <property type="project" value="UniProtKB-UniPathway"/>
</dbReference>
<dbReference type="GO" id="GO:0032259">
    <property type="term" value="P:methylation"/>
    <property type="evidence" value="ECO:0007669"/>
    <property type="project" value="UniProtKB-KW"/>
</dbReference>
<dbReference type="GO" id="GO:0019354">
    <property type="term" value="P:siroheme biosynthetic process"/>
    <property type="evidence" value="ECO:0007669"/>
    <property type="project" value="UniProtKB-UniPathway"/>
</dbReference>
<dbReference type="CDD" id="cd11642">
    <property type="entry name" value="SUMT"/>
    <property type="match status" value="1"/>
</dbReference>
<dbReference type="FunFam" id="3.30.950.10:FF:000001">
    <property type="entry name" value="Siroheme synthase"/>
    <property type="match status" value="1"/>
</dbReference>
<dbReference type="FunFam" id="3.40.1010.10:FF:000001">
    <property type="entry name" value="Siroheme synthase"/>
    <property type="match status" value="1"/>
</dbReference>
<dbReference type="Gene3D" id="3.40.1010.10">
    <property type="entry name" value="Cobalt-precorrin-4 Transmethylase, Domain 1"/>
    <property type="match status" value="1"/>
</dbReference>
<dbReference type="Gene3D" id="3.30.950.10">
    <property type="entry name" value="Methyltransferase, Cobalt-precorrin-4 Transmethylase, Domain 2"/>
    <property type="match status" value="1"/>
</dbReference>
<dbReference type="InterPro" id="IPR000878">
    <property type="entry name" value="4pyrrol_Mease"/>
</dbReference>
<dbReference type="InterPro" id="IPR035996">
    <property type="entry name" value="4pyrrol_Methylase_sf"/>
</dbReference>
<dbReference type="InterPro" id="IPR014777">
    <property type="entry name" value="4pyrrole_Mease_sub1"/>
</dbReference>
<dbReference type="InterPro" id="IPR014776">
    <property type="entry name" value="4pyrrole_Mease_sub2"/>
</dbReference>
<dbReference type="InterPro" id="IPR006366">
    <property type="entry name" value="CobA/CysG_C"/>
</dbReference>
<dbReference type="InterPro" id="IPR050161">
    <property type="entry name" value="Siro_Cobalamin_biosynth"/>
</dbReference>
<dbReference type="InterPro" id="IPR003043">
    <property type="entry name" value="Uropor_MeTrfase_CS"/>
</dbReference>
<dbReference type="NCBIfam" id="TIGR01469">
    <property type="entry name" value="cobA_cysG_Cterm"/>
    <property type="match status" value="1"/>
</dbReference>
<dbReference type="NCBIfam" id="NF004790">
    <property type="entry name" value="PRK06136.1"/>
    <property type="match status" value="1"/>
</dbReference>
<dbReference type="PANTHER" id="PTHR45790:SF3">
    <property type="entry name" value="S-ADENOSYL-L-METHIONINE-DEPENDENT UROPORPHYRINOGEN III METHYLTRANSFERASE, CHLOROPLASTIC"/>
    <property type="match status" value="1"/>
</dbReference>
<dbReference type="PANTHER" id="PTHR45790">
    <property type="entry name" value="SIROHEME SYNTHASE-RELATED"/>
    <property type="match status" value="1"/>
</dbReference>
<dbReference type="Pfam" id="PF00590">
    <property type="entry name" value="TP_methylase"/>
    <property type="match status" value="1"/>
</dbReference>
<dbReference type="SUPFAM" id="SSF53790">
    <property type="entry name" value="Tetrapyrrole methylase"/>
    <property type="match status" value="1"/>
</dbReference>
<dbReference type="PROSITE" id="PS00839">
    <property type="entry name" value="SUMT_1"/>
    <property type="match status" value="1"/>
</dbReference>
<dbReference type="PROSITE" id="PS00840">
    <property type="entry name" value="SUMT_2"/>
    <property type="match status" value="1"/>
</dbReference>
<keyword id="KW-0002">3D-structure</keyword>
<keyword id="KW-0169">Cobalamin biosynthesis</keyword>
<keyword id="KW-0903">Direct protein sequencing</keyword>
<keyword id="KW-0489">Methyltransferase</keyword>
<keyword id="KW-0627">Porphyrin biosynthesis</keyword>
<keyword id="KW-0949">S-adenosyl-L-methionine</keyword>
<keyword id="KW-0808">Transferase</keyword>
<evidence type="ECO:0000269" key="1">
    <source>
    </source>
</evidence>
<evidence type="ECO:0000269" key="2">
    <source>
    </source>
</evidence>
<evidence type="ECO:0000303" key="3">
    <source>
    </source>
</evidence>
<evidence type="ECO:0000305" key="4"/>
<evidence type="ECO:0000305" key="5">
    <source>
    </source>
</evidence>
<evidence type="ECO:0000312" key="6">
    <source>
        <dbReference type="EMBL" id="AAA25773.1"/>
    </source>
</evidence>
<evidence type="ECO:0007744" key="7">
    <source>
        <dbReference type="PDB" id="1S4D"/>
    </source>
</evidence>
<evidence type="ECO:0007829" key="8">
    <source>
        <dbReference type="PDB" id="1S4D"/>
    </source>
</evidence>
<accession>P21631</accession>
<gene>
    <name evidence="6" type="primary">cobA</name>
</gene>
<organism>
    <name type="scientific">Sinorhizobium sp</name>
    <dbReference type="NCBI Taxonomy" id="42445"/>
    <lineage>
        <taxon>Bacteria</taxon>
        <taxon>Pseudomonadati</taxon>
        <taxon>Pseudomonadota</taxon>
        <taxon>Alphaproteobacteria</taxon>
        <taxon>Hyphomicrobiales</taxon>
        <taxon>Rhizobiaceae</taxon>
        <taxon>Sinorhizobium/Ensifer group</taxon>
        <taxon>Sinorhizobium</taxon>
    </lineage>
</organism>
<name>SUMT_SINSX</name>